<organism>
    <name type="scientific">Pyrococcus abyssi (strain GE5 / Orsay)</name>
    <dbReference type="NCBI Taxonomy" id="272844"/>
    <lineage>
        <taxon>Archaea</taxon>
        <taxon>Methanobacteriati</taxon>
        <taxon>Methanobacteriota</taxon>
        <taxon>Thermococci</taxon>
        <taxon>Thermococcales</taxon>
        <taxon>Thermococcaceae</taxon>
        <taxon>Pyrococcus</taxon>
    </lineage>
</organism>
<reference key="1">
    <citation type="journal article" date="2003" name="Mol. Microbiol.">
        <title>An integrated analysis of the genome of the hyperthermophilic archaeon Pyrococcus abyssi.</title>
        <authorList>
            <person name="Cohen G.N."/>
            <person name="Barbe V."/>
            <person name="Flament D."/>
            <person name="Galperin M."/>
            <person name="Heilig R."/>
            <person name="Lecompte O."/>
            <person name="Poch O."/>
            <person name="Prieur D."/>
            <person name="Querellou J."/>
            <person name="Ripp R."/>
            <person name="Thierry J.-C."/>
            <person name="Van der Oost J."/>
            <person name="Weissenbach J."/>
            <person name="Zivanovic Y."/>
            <person name="Forterre P."/>
        </authorList>
    </citation>
    <scope>NUCLEOTIDE SEQUENCE [LARGE SCALE GENOMIC DNA]</scope>
    <source>
        <strain>GE5 / Orsay</strain>
    </source>
</reference>
<reference key="2">
    <citation type="journal article" date="2012" name="Curr. Microbiol.">
        <title>Re-annotation of two hyperthermophilic archaea Pyrococcus abyssi GE5 and Pyrococcus furiosus DSM 3638.</title>
        <authorList>
            <person name="Gao J."/>
            <person name="Wang J."/>
        </authorList>
    </citation>
    <scope>GENOME REANNOTATION</scope>
    <source>
        <strain>GE5 / Orsay</strain>
    </source>
</reference>
<keyword id="KW-0238">DNA-binding</keyword>
<feature type="chain" id="PRO_0000121560" description="DNA-binding protein PYRAB09250">
    <location>
        <begin position="1"/>
        <end position="115"/>
    </location>
</feature>
<dbReference type="EMBL" id="AJ248285">
    <property type="protein sequence ID" value="CAB49839.1"/>
    <property type="molecule type" value="Genomic_DNA"/>
</dbReference>
<dbReference type="EMBL" id="HE613800">
    <property type="protein sequence ID" value="CCE70333.1"/>
    <property type="molecule type" value="Genomic_DNA"/>
</dbReference>
<dbReference type="PIR" id="F75140">
    <property type="entry name" value="F75140"/>
</dbReference>
<dbReference type="SMR" id="P56813"/>
<dbReference type="STRING" id="272844.PAB0620"/>
<dbReference type="KEGG" id="pab:PAB0620"/>
<dbReference type="PATRIC" id="fig|272844.11.peg.979"/>
<dbReference type="eggNOG" id="arCOG04179">
    <property type="taxonomic scope" value="Archaea"/>
</dbReference>
<dbReference type="HOGENOM" id="CLU_122978_3_0_2"/>
<dbReference type="PhylomeDB" id="P56813"/>
<dbReference type="Proteomes" id="UP000000810">
    <property type="component" value="Chromosome"/>
</dbReference>
<dbReference type="Proteomes" id="UP000009139">
    <property type="component" value="Chromosome"/>
</dbReference>
<dbReference type="GO" id="GO:0005829">
    <property type="term" value="C:cytosol"/>
    <property type="evidence" value="ECO:0007669"/>
    <property type="project" value="TreeGrafter"/>
</dbReference>
<dbReference type="GO" id="GO:0003677">
    <property type="term" value="F:DNA binding"/>
    <property type="evidence" value="ECO:0007669"/>
    <property type="project" value="UniProtKB-UniRule"/>
</dbReference>
<dbReference type="Gene3D" id="1.10.8.140">
    <property type="entry name" value="PDCD5-like"/>
    <property type="match status" value="1"/>
</dbReference>
<dbReference type="HAMAP" id="MF_00026">
    <property type="entry name" value="dsDNA_bind"/>
    <property type="match status" value="1"/>
</dbReference>
<dbReference type="InterPro" id="IPR022889">
    <property type="entry name" value="DNA_bind_arc"/>
</dbReference>
<dbReference type="InterPro" id="IPR002836">
    <property type="entry name" value="PDCD5-like"/>
</dbReference>
<dbReference type="InterPro" id="IPR036883">
    <property type="entry name" value="PDCD5-like_sf"/>
</dbReference>
<dbReference type="NCBIfam" id="NF003268">
    <property type="entry name" value="PRK04239.1"/>
    <property type="match status" value="1"/>
</dbReference>
<dbReference type="PANTHER" id="PTHR10840">
    <property type="entry name" value="PROGRAMMED CELL DEATH PROTEIN 5"/>
    <property type="match status" value="1"/>
</dbReference>
<dbReference type="PANTHER" id="PTHR10840:SF0">
    <property type="entry name" value="PROGRAMMED CELL DEATH PROTEIN 5"/>
    <property type="match status" value="1"/>
</dbReference>
<dbReference type="Pfam" id="PF01984">
    <property type="entry name" value="dsDNA_bind"/>
    <property type="match status" value="1"/>
</dbReference>
<dbReference type="PIRSF" id="PIRSF015730">
    <property type="entry name" value="TFAR19"/>
    <property type="match status" value="1"/>
</dbReference>
<dbReference type="SUPFAM" id="SSF46950">
    <property type="entry name" value="Double-stranded DNA-binding domain"/>
    <property type="match status" value="1"/>
</dbReference>
<comment type="similarity">
    <text evidence="1">Belongs to the PDCD5 family.</text>
</comment>
<evidence type="ECO:0000255" key="1">
    <source>
        <dbReference type="HAMAP-Rule" id="MF_00026"/>
    </source>
</evidence>
<name>Y925_PYRAB</name>
<sequence>MREVAEDIEEIRRRKLLELQRKYLEQQKAQEEEARQQALIEAQIQAILRKILTPEARERLARVRLVRPELARQVELILVQLYQAGQITERIDDAKLKKILAQIEARTRREFRIKW</sequence>
<gene>
    <name type="ordered locus">PYRAB09250</name>
    <name type="ORF">PAB0620</name>
</gene>
<protein>
    <recommendedName>
        <fullName evidence="1">DNA-binding protein PYRAB09250</fullName>
    </recommendedName>
</protein>
<accession>P56813</accession>
<accession>G8ZI92</accession>
<proteinExistence type="inferred from homology"/>